<keyword id="KW-0108">Calcium channel impairing toxin</keyword>
<keyword id="KW-0903">Direct protein sequencing</keyword>
<keyword id="KW-1015">Disulfide bond</keyword>
<keyword id="KW-0872">Ion channel impairing toxin</keyword>
<keyword id="KW-0960">Knottin</keyword>
<keyword id="KW-0528">Neurotoxin</keyword>
<keyword id="KW-0582">Pharmaceutical</keyword>
<keyword id="KW-0632">Potassium channel impairing toxin</keyword>
<keyword id="KW-0964">Secreted</keyword>
<keyword id="KW-0800">Toxin</keyword>
<keyword id="KW-1218">Voltage-gated calcium channel impairing toxin</keyword>
<keyword id="KW-1220">Voltage-gated potassium channel impairing toxin</keyword>
<keyword id="KW-0738">Voltage-gated sodium channel impairing toxin</keyword>
<evidence type="ECO:0000250" key="1">
    <source>
        <dbReference type="UniProtKB" id="P83480"/>
    </source>
</evidence>
<evidence type="ECO:0000269" key="2">
    <source>
    </source>
</evidence>
<evidence type="ECO:0000303" key="3">
    <source>
    </source>
</evidence>
<evidence type="ECO:0000305" key="4"/>
<evidence type="ECO:0000305" key="5">
    <source>
    </source>
</evidence>
<comment type="function">
    <text evidence="1 2">Ion channel impairing toxin that inhibits voltage-gated calcium channel Cav3.1/CACNA1G (IC(50)=53 nM), voltage-gated potassium channels Kv2.1/KCNB1 (IC(50)=411 nM), all sodium channels tested (Nav1.2/SCN2A (IC(50)=60-104 nM), Nav1.5/SCN5A (IC(50)=76-358 nM), Nav1.6/SCN8A (IC(50)=21-133 nM), Nav1.7/SCN9A (IC(50)=51-95 nM), and Nav1.8/SCN10A) as well as the nociceptor cation channel TRPA1 (IC(50)=389 nM) (By similarity) (PubMed:32511987). Acts as a potent and selective blocker of voltage-gated calcium channel Cav3.1/CACNA1G, but not of Cav3.2/CACNA1H, and Cav3.3/CACNA1I (By similarity). On Nav1.7/SCN9A, primarily interacts with the DII and DIV voltage-sensor domains (PubMed:32511987). Also acts as an inhibitor of nociceptor cation channel TRPA1 (IC(50)~389 nM) by binding to the S1-S4 gating domain of TRPA1 (By similarity). It shows moderate affinity for lipid bilayers (By similarity).</text>
</comment>
<comment type="subcellular location">
    <subcellularLocation>
        <location evidence="2">Secreted</location>
    </subcellularLocation>
</comment>
<comment type="tissue specificity">
    <text evidence="5">Expressed by the venom gland.</text>
</comment>
<comment type="domain">
    <text evidence="1">The presence of a 'disulfide through disulfide knot' structurally defines this protein as a knottin.</text>
</comment>
<comment type="PTM">
    <text evidence="2">An unnatural amidation at Ser-35 provokes a 14-fold increased toxin ability to inhibit Nav1.2/SCN2A and a ~2-fold decreased toxin ability to inhibit both Nav1.5/SCN5A and Nav1.7/SCN9A.</text>
</comment>
<comment type="pharmaceutical">
    <text evidence="5">The amidated mutant G32A (ProTx-I-G32A-NH2) shows a decreased toxin ability to inhibit all sodium channels tested, with a more pronounced reduction on Nav1.2/SCN2A and Nav1.5/SCN5A. As a consequence, this mutant shows an enhanced selectivity and potency for Nav1.7/SCN9A, and thus may provide a good starting point for second generation analogs to treat pain.</text>
</comment>
<comment type="miscellaneous">
    <text evidence="4">The primary structure of the mature peptide is identical to that of ProTx-1 from Thrixopelma pruriens (AC P83480).</text>
</comment>
<comment type="similarity">
    <text evidence="4">Belongs to the neurotoxin 10 (Hwtx-1) family. 54 (ProTx-1) subfamily.</text>
</comment>
<protein>
    <recommendedName>
        <fullName evidence="3">Beta/omega-theraphotoxin-Bp1a</fullName>
        <shortName evidence="3">Beta/omega-TRTX-Bp1a</shortName>
    </recommendedName>
    <alternativeName>
        <fullName evidence="4">Protoxin-I analog</fullName>
        <shortName evidence="4">ProTx-I analog</shortName>
    </alternativeName>
</protein>
<proteinExistence type="evidence at protein level"/>
<name>TXPR1_BUMPU</name>
<feature type="peptide" id="PRO_0000451453" description="Beta/omega-theraphotoxin-Bp1a" evidence="2">
    <location>
        <begin position="1"/>
        <end position="35"/>
    </location>
</feature>
<feature type="site" description="Pharmacophore for Nav1.7/SCN9A" evidence="2">
    <location>
        <position position="6"/>
    </location>
</feature>
<feature type="site" description="Pharmacophore for Nav1.7/SCN9A" evidence="2">
    <location>
        <position position="19"/>
    </location>
</feature>
<feature type="site" description="Pharmacophore for Nav1.7/SCN9A" evidence="2">
    <location>
        <position position="27"/>
    </location>
</feature>
<feature type="site" description="Pharmacophore for Nav1.7/SCN9A" evidence="2">
    <location>
        <position position="29"/>
    </location>
</feature>
<feature type="site" description="Pharmacophore for Nav1.7/SCN9A" evidence="2">
    <location>
        <position position="30"/>
    </location>
</feature>
<feature type="site" description="Pharmacophore for Nav1.7/SCN9A" evidence="2">
    <location>
        <position position="31"/>
    </location>
</feature>
<feature type="disulfide bond" evidence="1">
    <location>
        <begin position="2"/>
        <end position="16"/>
    </location>
</feature>
<feature type="disulfide bond" evidence="1">
    <location>
        <begin position="9"/>
        <end position="21"/>
    </location>
</feature>
<feature type="disulfide bond" evidence="1">
    <location>
        <begin position="15"/>
        <end position="28"/>
    </location>
</feature>
<feature type="mutagenesis site" description="Decrease in ability to inhibit Nav1.7/SCN9A." evidence="2">
    <original>L</original>
    <variation>A</variation>
    <location>
        <position position="6"/>
    </location>
</feature>
<feature type="mutagenesis site" description="Decrease in ability to inhibit Nav1.2/SCN2A, Nav1.5/SCN5A, Nav1.6/SCN8A and Nav1.7/SCN9A." evidence="2">
    <original>K</original>
    <variation>E</variation>
    <location>
        <position position="17"/>
    </location>
</feature>
<feature type="mutagenesis site" description="Decrease in ability to inhibit Nav1.7/SCN9A." evidence="2">
    <original>L</original>
    <variation>A</variation>
    <location>
        <position position="19"/>
    </location>
</feature>
<feature type="mutagenesis site" description="Decrease in ability to inhibit Nav1.7/SCN9A." evidence="2">
    <original>W</original>
    <variation>A</variation>
    <location>
        <position position="27"/>
    </location>
</feature>
<feature type="mutagenesis site" description="Decrease in ability to inhibit Nav1.7/SCN9A." evidence="2">
    <original>V</original>
    <variation>A</variation>
    <location>
        <position position="29"/>
    </location>
</feature>
<feature type="mutagenesis site" description="Decrease in ability to inhibit Nav1.7/SCN9A." evidence="2">
    <original>W</original>
    <variation>A</variation>
    <location>
        <position position="30"/>
    </location>
</feature>
<feature type="mutagenesis site" description="Decrease in ability to inhibit Nav1.7/SCN9A." evidence="2">
    <original>D</original>
    <variation>A</variation>
    <location>
        <position position="31"/>
    </location>
</feature>
<accession>P0DQN3</accession>
<organism>
    <name type="scientific">Bumba pulcherrimaklaasi</name>
    <name type="common">Tarantula spider</name>
    <name type="synonym">Euathlus pulcherrimaklaasi</name>
    <dbReference type="NCBI Taxonomy" id="2024411"/>
    <lineage>
        <taxon>Eukaryota</taxon>
        <taxon>Metazoa</taxon>
        <taxon>Ecdysozoa</taxon>
        <taxon>Arthropoda</taxon>
        <taxon>Chelicerata</taxon>
        <taxon>Arachnida</taxon>
        <taxon>Araneae</taxon>
        <taxon>Mygalomorphae</taxon>
        <taxon>Theraphosidae</taxon>
        <taxon>Bumba</taxon>
    </lineage>
</organism>
<sequence>ECRYWLGGCSAGQTCCKHLVCSRRHGWCVWDGTFS</sequence>
<reference key="1">
    <citation type="journal article" date="2020" name="Biochem. Pharmacol.">
        <title>Mutational analysis of ProTx-I and the novel venom peptide Pe1b provide insight into residues responsible for selective inhibition of the analgesic drug target NaV1.7.</title>
        <authorList>
            <person name="Rupasinghe D.B."/>
            <person name="Herzig V."/>
            <person name="Vetter I."/>
            <person name="Dekan Z."/>
            <person name="Gilchrist J."/>
            <person name="Bosmans F."/>
            <person name="Alewood P.F."/>
            <person name="Lewis R.J."/>
            <person name="King G.F."/>
        </authorList>
    </citation>
    <scope>PROTEIN SEQUENCE</scope>
    <scope>FUNCTION</scope>
    <scope>SUBCELLULAR LOCATION</scope>
    <scope>RECOMBINANT EXPRESSION</scope>
    <scope>MUTAGENESIS OF LEU-6; LYS-17; LEU-19; TRP-27; VAL-29; TRP-30 AND ASP-31</scope>
    <source>
        <tissue>Venom</tissue>
    </source>
</reference>
<dbReference type="SMR" id="P0DQN3"/>
<dbReference type="GO" id="GO:0005576">
    <property type="term" value="C:extracellular region"/>
    <property type="evidence" value="ECO:0007669"/>
    <property type="project" value="UniProtKB-SubCell"/>
</dbReference>
<dbReference type="GO" id="GO:0005246">
    <property type="term" value="F:calcium channel regulator activity"/>
    <property type="evidence" value="ECO:0007669"/>
    <property type="project" value="UniProtKB-KW"/>
</dbReference>
<dbReference type="GO" id="GO:0008200">
    <property type="term" value="F:ion channel inhibitor activity"/>
    <property type="evidence" value="ECO:0007669"/>
    <property type="project" value="InterPro"/>
</dbReference>
<dbReference type="GO" id="GO:0015459">
    <property type="term" value="F:potassium channel regulator activity"/>
    <property type="evidence" value="ECO:0007669"/>
    <property type="project" value="UniProtKB-KW"/>
</dbReference>
<dbReference type="GO" id="GO:0017080">
    <property type="term" value="F:sodium channel regulator activity"/>
    <property type="evidence" value="ECO:0007669"/>
    <property type="project" value="UniProtKB-KW"/>
</dbReference>
<dbReference type="GO" id="GO:0090729">
    <property type="term" value="F:toxin activity"/>
    <property type="evidence" value="ECO:0007669"/>
    <property type="project" value="UniProtKB-KW"/>
</dbReference>
<dbReference type="InterPro" id="IPR011696">
    <property type="entry name" value="Huwentoxin-1"/>
</dbReference>
<dbReference type="Pfam" id="PF07740">
    <property type="entry name" value="Toxin_12"/>
    <property type="match status" value="1"/>
</dbReference>
<dbReference type="SUPFAM" id="SSF57059">
    <property type="entry name" value="omega toxin-like"/>
    <property type="match status" value="1"/>
</dbReference>